<feature type="chain" id="PRO_1000189708" description="Fluoride-specific ion channel FluC">
    <location>
        <begin position="1"/>
        <end position="126"/>
    </location>
</feature>
<feature type="transmembrane region" description="Helical" evidence="1">
    <location>
        <begin position="4"/>
        <end position="24"/>
    </location>
</feature>
<feature type="transmembrane region" description="Helical" evidence="1">
    <location>
        <begin position="36"/>
        <end position="56"/>
    </location>
</feature>
<feature type="transmembrane region" description="Helical" evidence="1">
    <location>
        <begin position="67"/>
        <end position="85"/>
    </location>
</feature>
<feature type="transmembrane region" description="Helical" evidence="1">
    <location>
        <begin position="101"/>
        <end position="121"/>
    </location>
</feature>
<feature type="binding site" evidence="1">
    <location>
        <position position="75"/>
    </location>
    <ligand>
        <name>Na(+)</name>
        <dbReference type="ChEBI" id="CHEBI:29101"/>
        <note>structural</note>
    </ligand>
</feature>
<feature type="binding site" evidence="1">
    <location>
        <position position="78"/>
    </location>
    <ligand>
        <name>Na(+)</name>
        <dbReference type="ChEBI" id="CHEBI:29101"/>
        <note>structural</note>
    </ligand>
</feature>
<reference key="1">
    <citation type="submission" date="2008-08" db="EMBL/GenBank/DDBJ databases">
        <title>Complete sequence of Anaeromyxobacter sp. K.</title>
        <authorList>
            <consortium name="US DOE Joint Genome Institute"/>
            <person name="Lucas S."/>
            <person name="Copeland A."/>
            <person name="Lapidus A."/>
            <person name="Glavina del Rio T."/>
            <person name="Dalin E."/>
            <person name="Tice H."/>
            <person name="Bruce D."/>
            <person name="Goodwin L."/>
            <person name="Pitluck S."/>
            <person name="Saunders E."/>
            <person name="Brettin T."/>
            <person name="Detter J.C."/>
            <person name="Han C."/>
            <person name="Larimer F."/>
            <person name="Land M."/>
            <person name="Hauser L."/>
            <person name="Kyrpides N."/>
            <person name="Ovchinnikiva G."/>
            <person name="Beliaev A."/>
        </authorList>
    </citation>
    <scope>NUCLEOTIDE SEQUENCE [LARGE SCALE GENOMIC DNA]</scope>
    <source>
        <strain>K</strain>
    </source>
</reference>
<organism>
    <name type="scientific">Anaeromyxobacter sp. (strain K)</name>
    <dbReference type="NCBI Taxonomy" id="447217"/>
    <lineage>
        <taxon>Bacteria</taxon>
        <taxon>Pseudomonadati</taxon>
        <taxon>Myxococcota</taxon>
        <taxon>Myxococcia</taxon>
        <taxon>Myxococcales</taxon>
        <taxon>Cystobacterineae</taxon>
        <taxon>Anaeromyxobacteraceae</taxon>
        <taxon>Anaeromyxobacter</taxon>
    </lineage>
</organism>
<keyword id="KW-0997">Cell inner membrane</keyword>
<keyword id="KW-1003">Cell membrane</keyword>
<keyword id="KW-0407">Ion channel</keyword>
<keyword id="KW-0406">Ion transport</keyword>
<keyword id="KW-0472">Membrane</keyword>
<keyword id="KW-0479">Metal-binding</keyword>
<keyword id="KW-0915">Sodium</keyword>
<keyword id="KW-0812">Transmembrane</keyword>
<keyword id="KW-1133">Transmembrane helix</keyword>
<keyword id="KW-0813">Transport</keyword>
<gene>
    <name evidence="1" type="primary">fluC</name>
    <name evidence="1" type="synonym">crcB</name>
    <name type="ordered locus">AnaeK_3567</name>
</gene>
<sequence length="126" mass="13016">MARLLLVCLGGALGSGARYLTSAWALRAFGPDFPRGTLLVNVSGSFLLAGIMTASLQSEAVPPDLRLFLAAGVMGGFTTYSSFNYETLALVEQGRLAAAAAYLLATVVGCLVAAFAATLLVRWLAG</sequence>
<dbReference type="EMBL" id="CP001131">
    <property type="protein sequence ID" value="ACG74780.1"/>
    <property type="molecule type" value="Genomic_DNA"/>
</dbReference>
<dbReference type="RefSeq" id="WP_012527549.1">
    <property type="nucleotide sequence ID" value="NC_011145.1"/>
</dbReference>
<dbReference type="SMR" id="B4UCE4"/>
<dbReference type="KEGG" id="ank:AnaeK_3567"/>
<dbReference type="HOGENOM" id="CLU_114342_1_4_7"/>
<dbReference type="OrthoDB" id="9806299at2"/>
<dbReference type="Proteomes" id="UP000001871">
    <property type="component" value="Chromosome"/>
</dbReference>
<dbReference type="GO" id="GO:0005886">
    <property type="term" value="C:plasma membrane"/>
    <property type="evidence" value="ECO:0007669"/>
    <property type="project" value="UniProtKB-SubCell"/>
</dbReference>
<dbReference type="GO" id="GO:0062054">
    <property type="term" value="F:fluoride channel activity"/>
    <property type="evidence" value="ECO:0007669"/>
    <property type="project" value="UniProtKB-UniRule"/>
</dbReference>
<dbReference type="GO" id="GO:0046872">
    <property type="term" value="F:metal ion binding"/>
    <property type="evidence" value="ECO:0007669"/>
    <property type="project" value="UniProtKB-KW"/>
</dbReference>
<dbReference type="GO" id="GO:0140114">
    <property type="term" value="P:cellular detoxification of fluoride"/>
    <property type="evidence" value="ECO:0007669"/>
    <property type="project" value="UniProtKB-UniRule"/>
</dbReference>
<dbReference type="HAMAP" id="MF_00454">
    <property type="entry name" value="FluC"/>
    <property type="match status" value="1"/>
</dbReference>
<dbReference type="InterPro" id="IPR003691">
    <property type="entry name" value="FluC"/>
</dbReference>
<dbReference type="NCBIfam" id="TIGR00494">
    <property type="entry name" value="crcB"/>
    <property type="match status" value="1"/>
</dbReference>
<dbReference type="PANTHER" id="PTHR28259">
    <property type="entry name" value="FLUORIDE EXPORT PROTEIN 1-RELATED"/>
    <property type="match status" value="1"/>
</dbReference>
<dbReference type="PANTHER" id="PTHR28259:SF1">
    <property type="entry name" value="FLUORIDE EXPORT PROTEIN 1-RELATED"/>
    <property type="match status" value="1"/>
</dbReference>
<dbReference type="Pfam" id="PF02537">
    <property type="entry name" value="CRCB"/>
    <property type="match status" value="1"/>
</dbReference>
<accession>B4UCE4</accession>
<proteinExistence type="inferred from homology"/>
<protein>
    <recommendedName>
        <fullName evidence="1">Fluoride-specific ion channel FluC</fullName>
    </recommendedName>
</protein>
<name>FLUC_ANASK</name>
<comment type="function">
    <text evidence="1">Fluoride-specific ion channel. Important for reducing fluoride concentration in the cell, thus reducing its toxicity.</text>
</comment>
<comment type="catalytic activity">
    <reaction evidence="1">
        <text>fluoride(in) = fluoride(out)</text>
        <dbReference type="Rhea" id="RHEA:76159"/>
        <dbReference type="ChEBI" id="CHEBI:17051"/>
    </reaction>
    <physiologicalReaction direction="left-to-right" evidence="1">
        <dbReference type="Rhea" id="RHEA:76160"/>
    </physiologicalReaction>
</comment>
<comment type="activity regulation">
    <text evidence="1">Na(+) is not transported, but it plays an essential structural role and its presence is essential for fluoride channel function.</text>
</comment>
<comment type="subcellular location">
    <subcellularLocation>
        <location evidence="1">Cell inner membrane</location>
        <topology evidence="1">Multi-pass membrane protein</topology>
    </subcellularLocation>
</comment>
<comment type="similarity">
    <text evidence="1">Belongs to the fluoride channel Fluc/FEX (TC 1.A.43) family.</text>
</comment>
<evidence type="ECO:0000255" key="1">
    <source>
        <dbReference type="HAMAP-Rule" id="MF_00454"/>
    </source>
</evidence>